<organism>
    <name type="scientific">Protochlamydia amoebophila (strain UWE25)</name>
    <dbReference type="NCBI Taxonomy" id="264201"/>
    <lineage>
        <taxon>Bacteria</taxon>
        <taxon>Pseudomonadati</taxon>
        <taxon>Chlamydiota</taxon>
        <taxon>Chlamydiia</taxon>
        <taxon>Parachlamydiales</taxon>
        <taxon>Parachlamydiaceae</taxon>
        <taxon>Candidatus Protochlamydia</taxon>
    </lineage>
</organism>
<evidence type="ECO:0000255" key="1">
    <source>
        <dbReference type="HAMAP-Rule" id="MF_00309"/>
    </source>
</evidence>
<sequence length="593" mass="66546">MKTLETRKEKKAQGKVLKAFGNLLQVTFEGNIRQGEVAMVHVDNLQLKSEVIEILGNQAKIQVFEDTKGVRLGSLVSFTGDLLEAELGPGLLSSIFDGLQNPLVDVADQAGLFLPKGIYLSALDRQRKWDFESSAKVGDVLFRGDRIGSTKEGRFHHFIMVPFSLYGKYRLTWVINSGSYTVDTVVAKAIDESGQEHSFTMVQKWPVKNALIHGEKIKPTKMMDTGERIIDTQFPLMKGGTFCTPGPFGAGKTVLQHHLSKYAAVDIVLFVACGERAGEVVEVLREFPHLIDPHTDEALMKRTVIICNTSSMPVAARESSIYMGITIAEYYRQMGLDVLVLADSTSRWAQALREMSGRLEEIPGEEAFPAYLSSRIAEFYERSGVVSLRHGKPGSITIGGAVSPAGGNFEEPVTQATLSVVGAFLGLSRARSDSRRYPAIDPLLSWSKYVDTVGNELSHQVDGWDQMVKRARHILFNGNEIGKRMEVVGEEGISMEDMLTYLKAELYDFSYLQQNAFDKEDAYCPLKRQIALFQLINQIFDTTFDFHTHDQAREFFLDLQNRIKNMNFISFDTEQYRKVFAEIKSIIEQQSRK</sequence>
<proteinExistence type="inferred from homology"/>
<feature type="chain" id="PRO_0000322468" description="V-type ATP synthase alpha chain">
    <location>
        <begin position="1"/>
        <end position="593"/>
    </location>
</feature>
<feature type="binding site" evidence="1">
    <location>
        <begin position="246"/>
        <end position="253"/>
    </location>
    <ligand>
        <name>ATP</name>
        <dbReference type="ChEBI" id="CHEBI:30616"/>
    </ligand>
</feature>
<accession>Q6MAJ5</accession>
<reference key="1">
    <citation type="journal article" date="2004" name="Science">
        <title>Illuminating the evolutionary history of chlamydiae.</title>
        <authorList>
            <person name="Horn M."/>
            <person name="Collingro A."/>
            <person name="Schmitz-Esser S."/>
            <person name="Beier C.L."/>
            <person name="Purkhold U."/>
            <person name="Fartmann B."/>
            <person name="Brandt P."/>
            <person name="Nyakatura G.J."/>
            <person name="Droege M."/>
            <person name="Frishman D."/>
            <person name="Rattei T."/>
            <person name="Mewes H.-W."/>
            <person name="Wagner M."/>
        </authorList>
    </citation>
    <scope>NUCLEOTIDE SEQUENCE [LARGE SCALE GENOMIC DNA]</scope>
    <source>
        <strain>UWE25</strain>
    </source>
</reference>
<name>VATA_PARUW</name>
<protein>
    <recommendedName>
        <fullName evidence="1">V-type ATP synthase alpha chain</fullName>
        <ecNumber evidence="1">7.1.2.2</ecNumber>
    </recommendedName>
    <alternativeName>
        <fullName evidence="1">V-ATPase subunit A</fullName>
    </alternativeName>
</protein>
<gene>
    <name evidence="1" type="primary">atpA</name>
    <name type="ordered locus">pc1680</name>
</gene>
<keyword id="KW-0066">ATP synthesis</keyword>
<keyword id="KW-0067">ATP-binding</keyword>
<keyword id="KW-0375">Hydrogen ion transport</keyword>
<keyword id="KW-0406">Ion transport</keyword>
<keyword id="KW-0547">Nucleotide-binding</keyword>
<keyword id="KW-1185">Reference proteome</keyword>
<keyword id="KW-1278">Translocase</keyword>
<keyword id="KW-0813">Transport</keyword>
<dbReference type="EC" id="7.1.2.2" evidence="1"/>
<dbReference type="EMBL" id="BX908798">
    <property type="protein sequence ID" value="CAF24404.1"/>
    <property type="molecule type" value="Genomic_DNA"/>
</dbReference>
<dbReference type="RefSeq" id="WP_011176226.1">
    <property type="nucleotide sequence ID" value="NC_005861.2"/>
</dbReference>
<dbReference type="SMR" id="Q6MAJ5"/>
<dbReference type="STRING" id="264201.pc1680"/>
<dbReference type="KEGG" id="pcu:PC_RS08040"/>
<dbReference type="eggNOG" id="COG1155">
    <property type="taxonomic scope" value="Bacteria"/>
</dbReference>
<dbReference type="HOGENOM" id="CLU_008162_1_1_0"/>
<dbReference type="OrthoDB" id="9803053at2"/>
<dbReference type="Proteomes" id="UP000000529">
    <property type="component" value="Chromosome"/>
</dbReference>
<dbReference type="GO" id="GO:0005524">
    <property type="term" value="F:ATP binding"/>
    <property type="evidence" value="ECO:0007669"/>
    <property type="project" value="UniProtKB-UniRule"/>
</dbReference>
<dbReference type="GO" id="GO:0046933">
    <property type="term" value="F:proton-transporting ATP synthase activity, rotational mechanism"/>
    <property type="evidence" value="ECO:0007669"/>
    <property type="project" value="UniProtKB-UniRule"/>
</dbReference>
<dbReference type="GO" id="GO:0046961">
    <property type="term" value="F:proton-transporting ATPase activity, rotational mechanism"/>
    <property type="evidence" value="ECO:0007669"/>
    <property type="project" value="InterPro"/>
</dbReference>
<dbReference type="GO" id="GO:0042777">
    <property type="term" value="P:proton motive force-driven plasma membrane ATP synthesis"/>
    <property type="evidence" value="ECO:0007669"/>
    <property type="project" value="UniProtKB-UniRule"/>
</dbReference>
<dbReference type="CDD" id="cd01426">
    <property type="entry name" value="ATP-synt_F1_V1_A1_AB_FliI_N"/>
    <property type="match status" value="1"/>
</dbReference>
<dbReference type="CDD" id="cd18111">
    <property type="entry name" value="ATP-synt_V_A-type_alpha_C"/>
    <property type="match status" value="1"/>
</dbReference>
<dbReference type="CDD" id="cd01134">
    <property type="entry name" value="V_A-ATPase_A"/>
    <property type="match status" value="1"/>
</dbReference>
<dbReference type="FunFam" id="3.40.50.300:FF:000675">
    <property type="entry name" value="V-type ATP synthase alpha chain"/>
    <property type="match status" value="1"/>
</dbReference>
<dbReference type="Gene3D" id="2.30.30.650">
    <property type="match status" value="1"/>
</dbReference>
<dbReference type="Gene3D" id="2.40.50.100">
    <property type="match status" value="1"/>
</dbReference>
<dbReference type="Gene3D" id="1.10.1140.10">
    <property type="entry name" value="Bovine Mitochondrial F1-atpase, Atp Synthase Beta Chain, Chain D, domain 3"/>
    <property type="match status" value="1"/>
</dbReference>
<dbReference type="Gene3D" id="3.40.50.300">
    <property type="entry name" value="P-loop containing nucleotide triphosphate hydrolases"/>
    <property type="match status" value="1"/>
</dbReference>
<dbReference type="HAMAP" id="MF_00309">
    <property type="entry name" value="ATP_synth_A_arch"/>
    <property type="match status" value="1"/>
</dbReference>
<dbReference type="InterPro" id="IPR055190">
    <property type="entry name" value="ATP-synt_VA_C"/>
</dbReference>
<dbReference type="InterPro" id="IPR031686">
    <property type="entry name" value="ATP-synth_a_Xtn"/>
</dbReference>
<dbReference type="InterPro" id="IPR020003">
    <property type="entry name" value="ATPase_a/bsu_AS"/>
</dbReference>
<dbReference type="InterPro" id="IPR004100">
    <property type="entry name" value="ATPase_F1/V1/A1_a/bsu_N"/>
</dbReference>
<dbReference type="InterPro" id="IPR000194">
    <property type="entry name" value="ATPase_F1/V1/A1_a/bsu_nucl-bd"/>
</dbReference>
<dbReference type="InterPro" id="IPR024034">
    <property type="entry name" value="ATPase_F1/V1_b/a_C"/>
</dbReference>
<dbReference type="InterPro" id="IPR027417">
    <property type="entry name" value="P-loop_NTPase"/>
</dbReference>
<dbReference type="InterPro" id="IPR022878">
    <property type="entry name" value="V-ATPase_asu"/>
</dbReference>
<dbReference type="NCBIfam" id="NF003220">
    <property type="entry name" value="PRK04192.1"/>
    <property type="match status" value="1"/>
</dbReference>
<dbReference type="PANTHER" id="PTHR43607:SF1">
    <property type="entry name" value="H(+)-TRANSPORTING TWO-SECTOR ATPASE"/>
    <property type="match status" value="1"/>
</dbReference>
<dbReference type="PANTHER" id="PTHR43607">
    <property type="entry name" value="V-TYPE PROTON ATPASE CATALYTIC SUBUNIT A"/>
    <property type="match status" value="1"/>
</dbReference>
<dbReference type="Pfam" id="PF00006">
    <property type="entry name" value="ATP-synt_ab"/>
    <property type="match status" value="1"/>
</dbReference>
<dbReference type="Pfam" id="PF02874">
    <property type="entry name" value="ATP-synt_ab_N"/>
    <property type="match status" value="1"/>
</dbReference>
<dbReference type="Pfam" id="PF16886">
    <property type="entry name" value="ATP-synt_ab_Xtn"/>
    <property type="match status" value="1"/>
</dbReference>
<dbReference type="Pfam" id="PF22919">
    <property type="entry name" value="ATP-synt_VA_C"/>
    <property type="match status" value="1"/>
</dbReference>
<dbReference type="SUPFAM" id="SSF47917">
    <property type="entry name" value="C-terminal domain of alpha and beta subunits of F1 ATP synthase"/>
    <property type="match status" value="1"/>
</dbReference>
<dbReference type="SUPFAM" id="SSF52540">
    <property type="entry name" value="P-loop containing nucleoside triphosphate hydrolases"/>
    <property type="match status" value="1"/>
</dbReference>
<dbReference type="PROSITE" id="PS00152">
    <property type="entry name" value="ATPASE_ALPHA_BETA"/>
    <property type="match status" value="1"/>
</dbReference>
<comment type="function">
    <text evidence="1">Produces ATP from ADP in the presence of a proton gradient across the membrane. The V-type alpha chain is a catalytic subunit.</text>
</comment>
<comment type="catalytic activity">
    <reaction evidence="1">
        <text>ATP + H2O + 4 H(+)(in) = ADP + phosphate + 5 H(+)(out)</text>
        <dbReference type="Rhea" id="RHEA:57720"/>
        <dbReference type="ChEBI" id="CHEBI:15377"/>
        <dbReference type="ChEBI" id="CHEBI:15378"/>
        <dbReference type="ChEBI" id="CHEBI:30616"/>
        <dbReference type="ChEBI" id="CHEBI:43474"/>
        <dbReference type="ChEBI" id="CHEBI:456216"/>
        <dbReference type="EC" id="7.1.2.2"/>
    </reaction>
</comment>
<comment type="similarity">
    <text evidence="1">Belongs to the ATPase alpha/beta chains family.</text>
</comment>